<accession>Q04634</accession>
<organism>
    <name type="scientific">Tetrahymena pyriformis</name>
    <dbReference type="NCBI Taxonomy" id="5908"/>
    <lineage>
        <taxon>Eukaryota</taxon>
        <taxon>Sar</taxon>
        <taxon>Alveolata</taxon>
        <taxon>Ciliophora</taxon>
        <taxon>Intramacronucleata</taxon>
        <taxon>Oligohymenophorea</taxon>
        <taxon>Hymenostomatida</taxon>
        <taxon>Tetrahymenina</taxon>
        <taxon>Tetrahymenidae</taxon>
        <taxon>Tetrahymena</taxon>
    </lineage>
</organism>
<proteinExistence type="evidence at transcript level"/>
<keyword id="KW-0963">Cytoplasm</keyword>
<keyword id="KW-0251">Elongation factor</keyword>
<keyword id="KW-0342">GTP-binding</keyword>
<keyword id="KW-0547">Nucleotide-binding</keyword>
<keyword id="KW-0648">Protein biosynthesis</keyword>
<evidence type="ECO:0000250" key="1"/>
<evidence type="ECO:0000305" key="2"/>
<dbReference type="EMBL" id="D11083">
    <property type="protein sequence ID" value="BAA01856.1"/>
    <property type="molecule type" value="mRNA"/>
</dbReference>
<dbReference type="PIR" id="A49171">
    <property type="entry name" value="A49171"/>
</dbReference>
<dbReference type="SMR" id="Q04634"/>
<dbReference type="GO" id="GO:0005737">
    <property type="term" value="C:cytoplasm"/>
    <property type="evidence" value="ECO:0007669"/>
    <property type="project" value="UniProtKB-SubCell"/>
</dbReference>
<dbReference type="GO" id="GO:0005525">
    <property type="term" value="F:GTP binding"/>
    <property type="evidence" value="ECO:0007669"/>
    <property type="project" value="UniProtKB-KW"/>
</dbReference>
<dbReference type="GO" id="GO:0003924">
    <property type="term" value="F:GTPase activity"/>
    <property type="evidence" value="ECO:0007669"/>
    <property type="project" value="InterPro"/>
</dbReference>
<dbReference type="GO" id="GO:0003746">
    <property type="term" value="F:translation elongation factor activity"/>
    <property type="evidence" value="ECO:0007669"/>
    <property type="project" value="UniProtKB-KW"/>
</dbReference>
<dbReference type="CDD" id="cd01883">
    <property type="entry name" value="EF1_alpha"/>
    <property type="match status" value="1"/>
</dbReference>
<dbReference type="CDD" id="cd03693">
    <property type="entry name" value="EF1_alpha_II"/>
    <property type="match status" value="1"/>
</dbReference>
<dbReference type="CDD" id="cd03705">
    <property type="entry name" value="EF1_alpha_III"/>
    <property type="match status" value="1"/>
</dbReference>
<dbReference type="FunFam" id="2.40.30.10:FF:000003">
    <property type="entry name" value="Elongation factor 1-alpha"/>
    <property type="match status" value="1"/>
</dbReference>
<dbReference type="FunFam" id="2.40.30.10:FF:000005">
    <property type="entry name" value="Elongation factor 1-alpha"/>
    <property type="match status" value="1"/>
</dbReference>
<dbReference type="FunFam" id="3.40.50.300:FF:000255">
    <property type="entry name" value="Elongation factor 1-alpha"/>
    <property type="match status" value="1"/>
</dbReference>
<dbReference type="Gene3D" id="3.40.50.300">
    <property type="entry name" value="P-loop containing nucleotide triphosphate hydrolases"/>
    <property type="match status" value="1"/>
</dbReference>
<dbReference type="Gene3D" id="2.40.30.10">
    <property type="entry name" value="Translation factors"/>
    <property type="match status" value="2"/>
</dbReference>
<dbReference type="HAMAP" id="MF_00118_A">
    <property type="entry name" value="EF_Tu_A"/>
    <property type="match status" value="1"/>
</dbReference>
<dbReference type="InterPro" id="IPR004161">
    <property type="entry name" value="EFTu-like_2"/>
</dbReference>
<dbReference type="InterPro" id="IPR031157">
    <property type="entry name" value="G_TR_CS"/>
</dbReference>
<dbReference type="InterPro" id="IPR054696">
    <property type="entry name" value="GTP-eEF1A_C"/>
</dbReference>
<dbReference type="InterPro" id="IPR027417">
    <property type="entry name" value="P-loop_NTPase"/>
</dbReference>
<dbReference type="InterPro" id="IPR000795">
    <property type="entry name" value="T_Tr_GTP-bd_dom"/>
</dbReference>
<dbReference type="InterPro" id="IPR050100">
    <property type="entry name" value="TRAFAC_GTPase_members"/>
</dbReference>
<dbReference type="InterPro" id="IPR009000">
    <property type="entry name" value="Transl_B-barrel_sf"/>
</dbReference>
<dbReference type="InterPro" id="IPR009001">
    <property type="entry name" value="Transl_elong_EF1A/Init_IF2_C"/>
</dbReference>
<dbReference type="InterPro" id="IPR004539">
    <property type="entry name" value="Transl_elong_EF1A_euk/arc"/>
</dbReference>
<dbReference type="NCBIfam" id="TIGR00483">
    <property type="entry name" value="EF-1_alpha"/>
    <property type="match status" value="1"/>
</dbReference>
<dbReference type="NCBIfam" id="NF008969">
    <property type="entry name" value="PRK12317.1"/>
    <property type="match status" value="1"/>
</dbReference>
<dbReference type="PANTHER" id="PTHR23115">
    <property type="entry name" value="TRANSLATION FACTOR"/>
    <property type="match status" value="1"/>
</dbReference>
<dbReference type="Pfam" id="PF22594">
    <property type="entry name" value="GTP-eEF1A_C"/>
    <property type="match status" value="1"/>
</dbReference>
<dbReference type="Pfam" id="PF00009">
    <property type="entry name" value="GTP_EFTU"/>
    <property type="match status" value="1"/>
</dbReference>
<dbReference type="Pfam" id="PF03144">
    <property type="entry name" value="GTP_EFTU_D2"/>
    <property type="match status" value="1"/>
</dbReference>
<dbReference type="PRINTS" id="PR00315">
    <property type="entry name" value="ELONGATNFCT"/>
</dbReference>
<dbReference type="SUPFAM" id="SSF50465">
    <property type="entry name" value="EF-Tu/eEF-1alpha/eIF2-gamma C-terminal domain"/>
    <property type="match status" value="1"/>
</dbReference>
<dbReference type="SUPFAM" id="SSF52540">
    <property type="entry name" value="P-loop containing nucleoside triphosphate hydrolases"/>
    <property type="match status" value="1"/>
</dbReference>
<dbReference type="SUPFAM" id="SSF50447">
    <property type="entry name" value="Translation proteins"/>
    <property type="match status" value="1"/>
</dbReference>
<dbReference type="PROSITE" id="PS00301">
    <property type="entry name" value="G_TR_1"/>
    <property type="match status" value="1"/>
</dbReference>
<dbReference type="PROSITE" id="PS51722">
    <property type="entry name" value="G_TR_2"/>
    <property type="match status" value="1"/>
</dbReference>
<feature type="chain" id="PRO_0000090930" description="Elongation factor 1-alpha">
    <location>
        <begin position="1"/>
        <end position="435"/>
    </location>
</feature>
<feature type="domain" description="tr-type G">
    <location>
        <begin position="6"/>
        <end position="231"/>
    </location>
</feature>
<feature type="region of interest" description="G1" evidence="1">
    <location>
        <begin position="15"/>
        <end position="22"/>
    </location>
</feature>
<feature type="region of interest" description="G2" evidence="1">
    <location>
        <begin position="71"/>
        <end position="75"/>
    </location>
</feature>
<feature type="region of interest" description="G3" evidence="1">
    <location>
        <begin position="92"/>
        <end position="95"/>
    </location>
</feature>
<feature type="region of interest" description="G4" evidence="1">
    <location>
        <begin position="154"/>
        <end position="157"/>
    </location>
</feature>
<feature type="region of interest" description="G5" evidence="1">
    <location>
        <begin position="195"/>
        <end position="197"/>
    </location>
</feature>
<feature type="binding site" evidence="1">
    <location>
        <begin position="15"/>
        <end position="22"/>
    </location>
    <ligand>
        <name>GTP</name>
        <dbReference type="ChEBI" id="CHEBI:37565"/>
    </ligand>
</feature>
<feature type="binding site" evidence="1">
    <location>
        <begin position="92"/>
        <end position="96"/>
    </location>
    <ligand>
        <name>GTP</name>
        <dbReference type="ChEBI" id="CHEBI:37565"/>
    </ligand>
</feature>
<feature type="binding site" evidence="1">
    <location>
        <begin position="154"/>
        <end position="157"/>
    </location>
    <ligand>
        <name>GTP</name>
        <dbReference type="ChEBI" id="CHEBI:37565"/>
    </ligand>
</feature>
<protein>
    <recommendedName>
        <fullName>Elongation factor 1-alpha</fullName>
        <shortName>EF-1-alpha</shortName>
    </recommendedName>
    <alternativeName>
        <fullName>14 nm filament-associated protein</fullName>
    </alternativeName>
</protein>
<sequence length="435" mass="48298">MARGDKVHINLVVIGHVDSGKSTTTGHLIYKCGGIDKRVIEKFEKESAEQGKGSFKYAWVLDKLKAERERGITIDISLWKFETAKYHFTIIDAPGHRDFIKNMITGTSQADVAILMIASPQGEFEAGISKDGQTREHALLAFTLGVKQMIVCLNKMDEKTVNFSEERYQEIKKELSDYLKKVGYKPDTIPFIPISGFNGDNMLERSTNAPWYKGPILVEALDALEPPKRPVDKPLRLPLQDVYKIGGIGTVPVGRVETGVIKPGMSIQFAPNKVIAECKSVEMHHEQLPEAVPGDNVGFNIKGVSVKDIRRGNVASDAKNDPAKEAATFYSQVIIMNHPGQIQAGYTPVLDCHTAHIACKFETIHDKIDRRTGKSQEENPKFIKNGDAALVTLIPTKALCVEVFQEYPPLGRYAVRDMKQTVAVGVIKKVEKKDK</sequence>
<reference key="1">
    <citation type="journal article" date="1992" name="Exp. Cell Res.">
        <title>Identification of Tetrahymena 14-nm filament-associated protein as elongation factor 1 alpha.</title>
        <authorList>
            <person name="Kurasawa Y."/>
            <person name="Numata O."/>
            <person name="Katoh M."/>
            <person name="Hirano H."/>
            <person name="Chiba J."/>
            <person name="Watanabe Y."/>
        </authorList>
    </citation>
    <scope>NUCLEOTIDE SEQUENCE [MRNA]</scope>
</reference>
<name>EF1A_TETPY</name>
<comment type="function">
    <text>This protein promotes the GTP-dependent binding of aminoacyl-tRNA to the A-site of ribosomes during protein biosynthesis.</text>
</comment>
<comment type="subcellular location">
    <subcellularLocation>
        <location>Cytoplasm</location>
    </subcellularLocation>
</comment>
<comment type="similarity">
    <text evidence="2">Belongs to the TRAFAC class translation factor GTPase superfamily. Classic translation factor GTPase family. EF-Tu/EF-1A subfamily.</text>
</comment>